<dbReference type="EMBL" id="L43967">
    <property type="protein sequence ID" value="AAC71333.1"/>
    <property type="molecule type" value="Genomic_DNA"/>
</dbReference>
<dbReference type="RefSeq" id="WP_009885673.1">
    <property type="nucleotide sequence ID" value="NC_000908.2"/>
</dbReference>
<dbReference type="SMR" id="P47361"/>
<dbReference type="STRING" id="243273.MG_115"/>
<dbReference type="GeneID" id="88282239"/>
<dbReference type="KEGG" id="mge:MG_115"/>
<dbReference type="eggNOG" id="COG1546">
    <property type="taxonomic scope" value="Bacteria"/>
</dbReference>
<dbReference type="HOGENOM" id="CLU_030805_1_2_14"/>
<dbReference type="InParanoid" id="P47361"/>
<dbReference type="OrthoDB" id="399376at2"/>
<dbReference type="BioCyc" id="MGEN243273:G1GJ2-128-MONOMER"/>
<dbReference type="Proteomes" id="UP000000807">
    <property type="component" value="Chromosome"/>
</dbReference>
<dbReference type="Gene3D" id="3.90.950.20">
    <property type="entry name" value="CinA-like"/>
    <property type="match status" value="1"/>
</dbReference>
<dbReference type="InterPro" id="IPR036653">
    <property type="entry name" value="CinA-like_C"/>
</dbReference>
<dbReference type="InterPro" id="IPR008136">
    <property type="entry name" value="CinA_C"/>
</dbReference>
<dbReference type="NCBIfam" id="TIGR00199">
    <property type="entry name" value="PncC_domain"/>
    <property type="match status" value="1"/>
</dbReference>
<dbReference type="Pfam" id="PF02464">
    <property type="entry name" value="CinA"/>
    <property type="match status" value="1"/>
</dbReference>
<dbReference type="SUPFAM" id="SSF142433">
    <property type="entry name" value="CinA-like"/>
    <property type="match status" value="1"/>
</dbReference>
<comment type="similarity">
    <text evidence="1">Belongs to the CinA family.</text>
</comment>
<keyword id="KW-1185">Reference proteome</keyword>
<name>Y115_MYCGE</name>
<accession>P47361</accession>
<reference key="1">
    <citation type="journal article" date="1995" name="Science">
        <title>The minimal gene complement of Mycoplasma genitalium.</title>
        <authorList>
            <person name="Fraser C.M."/>
            <person name="Gocayne J.D."/>
            <person name="White O."/>
            <person name="Adams M.D."/>
            <person name="Clayton R.A."/>
            <person name="Fleischmann R.D."/>
            <person name="Bult C.J."/>
            <person name="Kerlavage A.R."/>
            <person name="Sutton G.G."/>
            <person name="Kelley J.M."/>
            <person name="Fritchman J.L."/>
            <person name="Weidman J.F."/>
            <person name="Small K.V."/>
            <person name="Sandusky M."/>
            <person name="Fuhrmann J.L."/>
            <person name="Nguyen D.T."/>
            <person name="Utterback T.R."/>
            <person name="Saudek D.M."/>
            <person name="Phillips C.A."/>
            <person name="Merrick J.M."/>
            <person name="Tomb J.-F."/>
            <person name="Dougherty B.A."/>
            <person name="Bott K.F."/>
            <person name="Hu P.-C."/>
            <person name="Lucier T.S."/>
            <person name="Peterson S.N."/>
            <person name="Smith H.O."/>
            <person name="Hutchison C.A. III"/>
            <person name="Venter J.C."/>
        </authorList>
    </citation>
    <scope>NUCLEOTIDE SEQUENCE [LARGE SCALE GENOMIC DNA]</scope>
    <source>
        <strain>ATCC 33530 / DSM 19775 / NCTC 10195 / G37</strain>
    </source>
</reference>
<reference key="2">
    <citation type="submission" date="1998-10" db="EMBL/GenBank/DDBJ databases">
        <authorList>
            <person name="Fraser C.M."/>
            <person name="Gocayne J.D."/>
            <person name="White O."/>
            <person name="Adams M.D."/>
            <person name="Clayton R.A."/>
            <person name="Fleischmann R.D."/>
            <person name="Bult C.J."/>
            <person name="Kerlavage A.R."/>
            <person name="Sutton G.G."/>
            <person name="Kelley J.M."/>
            <person name="Fritchman J.L."/>
            <person name="Weidman J.F."/>
            <person name="Small K.V."/>
            <person name="Sandusky M."/>
            <person name="Fuhrmann J.L."/>
            <person name="Nguyen D.T."/>
            <person name="Utterback T.R."/>
            <person name="Saudek D.M."/>
            <person name="Phillips C.A."/>
            <person name="Merrick J.M."/>
            <person name="Tomb J.-F."/>
            <person name="Dougherty B.A."/>
            <person name="Bott K.F."/>
            <person name="Hu P.-C."/>
            <person name="Lucier T.S."/>
            <person name="Peterson S.N."/>
            <person name="Smith H.O."/>
            <person name="Hutchison C.A. III"/>
            <person name="Venter J.C."/>
        </authorList>
    </citation>
    <scope>SEQUENCE REVISION</scope>
</reference>
<organism>
    <name type="scientific">Mycoplasma genitalium (strain ATCC 33530 / DSM 19775 / NCTC 10195 / G37)</name>
    <name type="common">Mycoplasmoides genitalium</name>
    <dbReference type="NCBI Taxonomy" id="243273"/>
    <lineage>
        <taxon>Bacteria</taxon>
        <taxon>Bacillati</taxon>
        <taxon>Mycoplasmatota</taxon>
        <taxon>Mycoplasmoidales</taxon>
        <taxon>Mycoplasmoidaceae</taxon>
        <taxon>Mycoplasmoides</taxon>
    </lineage>
</organism>
<protein>
    <recommendedName>
        <fullName>Protein MG115</fullName>
    </recommendedName>
</protein>
<evidence type="ECO:0000305" key="1"/>
<proteinExistence type="inferred from homology"/>
<feature type="chain" id="PRO_0000156788" description="Protein MG115">
    <location>
        <begin position="1"/>
        <end position="157"/>
    </location>
</feature>
<gene>
    <name type="ordered locus">MG115</name>
</gene>
<sequence length="157" mass="16986">MFANLIAEKLQKLQLSVATAESVTGGLLAHCLTSIDGASNYFNGGVIAYNNQVKINLLNVQSSTIANHGAVSSFCAREMAVGVKQKFQADVGIACSGIAGSKAVENKAIGLLFFCIIIGNKAYDFEFEMNQNNRKDNIELFTNKILESFHYLLTKLA</sequence>